<sequence>MRVRALRLAALVGAGAALALSPLAAGPASADTTVSEPAPSCVTLYQSWRYSQADNGCAQTVTVKVVYEDDTEGLCYAVAPGQITTVGDGYIGSHGHARYLARCL</sequence>
<protein>
    <recommendedName>
        <fullName>Alpha-amylase inhibitor HOE-467A</fullName>
    </recommendedName>
    <alternativeName>
        <fullName>Tendamistat</fullName>
    </alternativeName>
</protein>
<proteinExistence type="evidence at protein level"/>
<comment type="function">
    <text>Inhibits mammalian alpha-amylases specifically but has no action on plant and microbial alpha-amylases. Forms a tight stoichiometric 1:1 complex with alpha-amylase.</text>
</comment>
<dbReference type="EMBL" id="M28478">
    <property type="protein sequence ID" value="AAA26686.1"/>
    <property type="molecule type" value="Genomic_DNA"/>
</dbReference>
<dbReference type="PIR" id="A33961">
    <property type="entry name" value="WISMAT"/>
</dbReference>
<dbReference type="PDB" id="1BVN">
    <property type="method" value="X-ray"/>
    <property type="resolution" value="2.50 A"/>
    <property type="chains" value="T=31-104"/>
</dbReference>
<dbReference type="PDB" id="1HOE">
    <property type="method" value="X-ray"/>
    <property type="resolution" value="2.00 A"/>
    <property type="chains" value="A=31-104"/>
</dbReference>
<dbReference type="PDB" id="1OK0">
    <property type="method" value="X-ray"/>
    <property type="resolution" value="0.93 A"/>
    <property type="chains" value="A=31-104"/>
</dbReference>
<dbReference type="PDB" id="2AIT">
    <property type="method" value="NMR"/>
    <property type="chains" value="A=31-104"/>
</dbReference>
<dbReference type="PDB" id="3AIT">
    <property type="method" value="NMR"/>
    <property type="chains" value="A=31-104"/>
</dbReference>
<dbReference type="PDB" id="4AIT">
    <property type="method" value="NMR"/>
    <property type="chains" value="A=31-104"/>
</dbReference>
<dbReference type="PDBsum" id="1BVN"/>
<dbReference type="PDBsum" id="1HOE"/>
<dbReference type="PDBsum" id="1OK0"/>
<dbReference type="PDBsum" id="2AIT"/>
<dbReference type="PDBsum" id="3AIT"/>
<dbReference type="PDBsum" id="4AIT"/>
<dbReference type="BMRB" id="P01092"/>
<dbReference type="SMR" id="P01092"/>
<dbReference type="MINT" id="P01092"/>
<dbReference type="EvolutionaryTrace" id="P01092"/>
<dbReference type="GO" id="GO:0015066">
    <property type="term" value="F:alpha-amylase inhibitor activity"/>
    <property type="evidence" value="ECO:0007669"/>
    <property type="project" value="UniProtKB-KW"/>
</dbReference>
<dbReference type="Gene3D" id="2.60.40.20">
    <property type="entry name" value="Alpha-amylase inhibitor"/>
    <property type="match status" value="1"/>
</dbReference>
<dbReference type="InterPro" id="IPR000833">
    <property type="entry name" value="A-amylase_inhib"/>
</dbReference>
<dbReference type="InterPro" id="IPR036379">
    <property type="entry name" value="A-amylase_inhib_sf"/>
</dbReference>
<dbReference type="Pfam" id="PF01356">
    <property type="entry name" value="A_amylase_inhib"/>
    <property type="match status" value="1"/>
</dbReference>
<dbReference type="PIRSF" id="PIRSF001658">
    <property type="entry name" value="Amylase_inhib"/>
    <property type="match status" value="1"/>
</dbReference>
<dbReference type="SMART" id="SM00783">
    <property type="entry name" value="A_amylase_inhib"/>
    <property type="match status" value="1"/>
</dbReference>
<dbReference type="SUPFAM" id="SSF49498">
    <property type="entry name" value="alpha-Amylase inhibitor tendamistat"/>
    <property type="match status" value="1"/>
</dbReference>
<reference key="1">
    <citation type="journal article" date="1989" name="J. Bacteriol.">
        <title>Heterologous expression of the alpha-amylase inhibitor gene cloned from an amplified genomic sequence of Streptomyces tendae.</title>
        <authorList>
            <person name="Koller K.P."/>
            <person name="Riess G."/>
        </authorList>
    </citation>
    <scope>NUCLEOTIDE SEQUENCE [GENOMIC DNA]</scope>
    <source>
        <strain>ATCC 31210 / 4158</strain>
    </source>
</reference>
<reference key="2">
    <citation type="journal article" date="1983" name="Hoppe-Seyler's Z. Physiol. Chem.">
        <title>The primary structure of the alpha-amylase inhibitor Hoe 467A from Streptomyces tendae 4158. A new class of inhibitors.</title>
        <authorList>
            <person name="Aschauer H."/>
            <person name="Vertesy L."/>
            <person name="Nesemann G."/>
            <person name="Braunitzer G."/>
        </authorList>
    </citation>
    <scope>PROTEIN SEQUENCE OF 31-104</scope>
    <source>
        <strain>ATCC 31210 / 4158</strain>
    </source>
</reference>
<reference key="3">
    <citation type="journal article" date="1984" name="Eur. J. Biochem.">
        <title>Tendamistat (HOE 467), a tight-binding alpha-amylase inhibitor from Streptomyces tendae 4158. Isolation, biochemical properties.</title>
        <authorList>
            <person name="Vertesy L."/>
            <person name="Oeding V."/>
            <person name="Bender R."/>
            <person name="Zepf K."/>
            <person name="Nesemann G."/>
        </authorList>
    </citation>
    <scope>CHARACTERIZATION</scope>
    <source>
        <strain>ATCC 31210 / 4158</strain>
    </source>
</reference>
<reference key="4">
    <citation type="journal article" date="1986" name="J. Mol. Biol.">
        <title>Crystal structure determination, refinement and the molecular model of the alpha-amylase inhibitor Hoe-467A.</title>
        <authorList>
            <person name="Pflugrath J.W."/>
            <person name="Wiegand G."/>
            <person name="Huber R."/>
            <person name="Vertesy L."/>
        </authorList>
    </citation>
    <scope>X-RAY CRYSTALLOGRAPHY (2.0 ANGSTROMS)</scope>
</reference>
<reference key="5">
    <citation type="journal article" date="1995" name="J. Mol. Biol.">
        <title>The crystal structure of porcine pancreatic alpha-amylase in complex with the microbial inhibitor Tendamistat.</title>
        <authorList>
            <person name="Wiegand G."/>
            <person name="Epp O."/>
            <person name="Huber R."/>
        </authorList>
    </citation>
    <scope>X-RAY CRYSTALLOGRAPHY (2.5 ANGSTROMS) OF COMPLEX WITH ALPHA-AMYLASE</scope>
</reference>
<reference key="6">
    <citation type="journal article" date="1985" name="J. Mol. Biol.">
        <title>Secondary structure of the alpha-amylase polypeptide inhibitor tendamistat from Streptomyces tendae determined in solution by 1H nuclear magnetic resonance.</title>
        <authorList>
            <person name="Kline A.D."/>
            <person name="Wuethrich K."/>
        </authorList>
    </citation>
    <scope>STRUCTURE BY NMR</scope>
</reference>
<reference key="7">
    <citation type="journal article" date="1988" name="J. Mol. Biol.">
        <title>Determination of the complete three-dimensional structure of the alpha-amylase inhibitor tendamistat in aqueous solution by nuclear magnetic resonance and distance geometry.</title>
        <authorList>
            <person name="Kline A.D."/>
            <person name="Braun W."/>
            <person name="Wuethrich K."/>
        </authorList>
    </citation>
    <scope>STRUCTURE BY NMR</scope>
</reference>
<reference key="8">
    <citation type="journal article" date="1989" name="J. Mol. Biol.">
        <title>Comparison of the high-resolution structures of the alpha-amylase inhibitor tendamistat determined by nuclear magnetic resonance in solution and by X-ray diffraction in single crystals.</title>
        <authorList>
            <person name="Billeter M."/>
            <person name="Kline A.D."/>
            <person name="Braun W."/>
            <person name="Huber R."/>
            <person name="Wuethrich K."/>
        </authorList>
    </citation>
    <scope>STRUCTURE BY NMR</scope>
</reference>
<reference key="9">
    <citation type="journal article" date="1994" name="Eur. J. Biochem.">
        <title>The nuclear-magnetic-resonance solution structure of the mutant alpha-amylase inhibitor [R19L] Tendamistat and comparison with wild-type Tendamistat.</title>
        <authorList>
            <person name="O'Connell J.F."/>
            <person name="Bender R."/>
            <person name="Engels J.W."/>
            <person name="Koller K.P."/>
            <person name="Scharf M."/>
            <person name="Wuethrich K."/>
        </authorList>
    </citation>
    <scope>STRUCTURE BY NMR OF MUTANT LEU-49</scope>
</reference>
<organism>
    <name type="scientific">Streptomyces tendae</name>
    <dbReference type="NCBI Taxonomy" id="1932"/>
    <lineage>
        <taxon>Bacteria</taxon>
        <taxon>Bacillati</taxon>
        <taxon>Actinomycetota</taxon>
        <taxon>Actinomycetes</taxon>
        <taxon>Kitasatosporales</taxon>
        <taxon>Streptomycetaceae</taxon>
        <taxon>Streptomyces</taxon>
    </lineage>
</organism>
<accession>P01092</accession>
<feature type="signal peptide" evidence="1">
    <location>
        <begin position="1"/>
        <end position="30"/>
    </location>
</feature>
<feature type="chain" id="PRO_0000014343" description="Alpha-amylase inhibitor HOE-467A">
    <location>
        <begin position="31"/>
        <end position="104"/>
    </location>
</feature>
<feature type="disulfide bond" evidence="1">
    <location>
        <begin position="41"/>
        <end position="57"/>
    </location>
</feature>
<feature type="disulfide bond" evidence="1">
    <location>
        <begin position="75"/>
        <end position="103"/>
    </location>
</feature>
<feature type="sequence conflict" description="In Ref. 2; AA sequence." evidence="2" ref="2">
    <original>Q</original>
    <variation>E</variation>
    <location>
        <position position="59"/>
    </location>
</feature>
<feature type="strand" evidence="5">
    <location>
        <begin position="35"/>
        <end position="37"/>
    </location>
</feature>
<feature type="strand" evidence="3">
    <location>
        <begin position="42"/>
        <end position="46"/>
    </location>
</feature>
<feature type="strand" evidence="3">
    <location>
        <begin position="48"/>
        <end position="55"/>
    </location>
</feature>
<feature type="strand" evidence="3">
    <location>
        <begin position="57"/>
        <end position="59"/>
    </location>
</feature>
<feature type="strand" evidence="3">
    <location>
        <begin position="61"/>
        <end position="67"/>
    </location>
</feature>
<feature type="strand" evidence="3">
    <location>
        <begin position="76"/>
        <end position="78"/>
    </location>
</feature>
<feature type="strand" evidence="3">
    <location>
        <begin position="83"/>
        <end position="88"/>
    </location>
</feature>
<feature type="strand" evidence="4">
    <location>
        <begin position="90"/>
        <end position="94"/>
    </location>
</feature>
<feature type="strand" evidence="3">
    <location>
        <begin position="96"/>
        <end position="102"/>
    </location>
</feature>
<keyword id="KW-0002">3D-structure</keyword>
<keyword id="KW-0022">Alpha-amylase inhibitor</keyword>
<keyword id="KW-0903">Direct protein sequencing</keyword>
<keyword id="KW-1015">Disulfide bond</keyword>
<keyword id="KW-0732">Signal</keyword>
<name>IAA_STRTE</name>
<evidence type="ECO:0000269" key="1">
    <source>
    </source>
</evidence>
<evidence type="ECO:0000305" key="2"/>
<evidence type="ECO:0007829" key="3">
    <source>
        <dbReference type="PDB" id="1OK0"/>
    </source>
</evidence>
<evidence type="ECO:0007829" key="4">
    <source>
        <dbReference type="PDB" id="2AIT"/>
    </source>
</evidence>
<evidence type="ECO:0007829" key="5">
    <source>
        <dbReference type="PDB" id="4AIT"/>
    </source>
</evidence>